<keyword id="KW-1003">Cell membrane</keyword>
<keyword id="KW-0961">Cell wall biogenesis/degradation</keyword>
<keyword id="KW-0968">Cytoplasmic vesicle</keyword>
<keyword id="KW-0325">Glycoprotein</keyword>
<keyword id="KW-0328">Glycosyltransferase</keyword>
<keyword id="KW-0472">Membrane</keyword>
<keyword id="KW-1185">Reference proteome</keyword>
<keyword id="KW-0808">Transferase</keyword>
<keyword id="KW-0812">Transmembrane</keyword>
<keyword id="KW-1133">Transmembrane helix</keyword>
<proteinExistence type="evidence at transcript level"/>
<evidence type="ECO:0000255" key="1"/>
<evidence type="ECO:0000256" key="2">
    <source>
        <dbReference type="SAM" id="MobiDB-lite"/>
    </source>
</evidence>
<evidence type="ECO:0000269" key="3">
    <source>
    </source>
</evidence>
<evidence type="ECO:0000269" key="4">
    <source>
    </source>
</evidence>
<evidence type="ECO:0000269" key="5">
    <source>
    </source>
</evidence>
<evidence type="ECO:0000269" key="6">
    <source>
    </source>
</evidence>
<evidence type="ECO:0000303" key="7">
    <source>
    </source>
</evidence>
<evidence type="ECO:0000303" key="8">
    <source>
    </source>
</evidence>
<evidence type="ECO:0000305" key="9"/>
<evidence type="ECO:0000305" key="10">
    <source ref="2"/>
</evidence>
<gene>
    <name evidence="7" type="primary">CHS4</name>
    <name evidence="8" type="synonym">CHS2</name>
    <name type="ORF">UMAG_10117</name>
</gene>
<sequence>MPPRYPFGGGAQSDEAHHQPLERRTTAEAQGNSFTHGHTAYPTYDMGAEPHSPPHVSYDPYLPPSTSGDHSGYEMPSANYNDHHRSSYPQAIHSPPRMTNPYANSQPRQGSADPFDEHDGDVPLLPRGGNYAYAPASHFDEHGNHVGPVDKYADGDDDVMDEDAVNGQARGRLLHTQVPHDDDYMPGGFDPNVLENGQAGGVRFGKIPQRVPRRYKTLKRVELYHGNLVLDCPVPSKLLDKLNDRESREFTHMRYTAATCDPDEFKTERYTLRQVLFDPPRRTELFIVLTMYNEDEELFTRTMHGVMTNIAHLCTRERSKTWGKEGWKKVVVCIVSDGRLKINSRTLACLAAMGVYQEGVGKNVVNGKPVTAHIYEYTAQLSIDPSMHFKGREKGIMPVQILFCLKERNQKKINSHRWFFNAFGQILQPNICVLLDVGTMPRPRSIYHLWKAFDINSNVGGACGEIVALKGKFWGALLNPLVAAQNFEYKMSNILDKPLESVFGYITVLPGAFSAYRYIALQNDAHGQGPLCSYFKGETLHGGQSDADVFTSNMYLAEDRILCWELVSKRDSAWILHYVKSAQAVTDVPDQVPELISQRRRWLNGSFFAGIHSIIKFGYIYRSSHSFGRKFALHIEIIYQTIQLIFSWFGMANFFIAFFILTSAMSDKIHALKVPNLVLSYIYVAFIIFCFLLSMGNRPAGSKAGYTLAMVVFALLTVYMTGAAIYLAVDSILNATGPNGGGTDALVSNRTFVNIVISLAATFGIWLIASIMFLEPMHMVTSIVQYLLMAPTFVNVISIYAFANINDISWGTKGSDKVMTDLGVVGGSGNNQVEVAIPTESKDINDAYDDAIHVLSNKAPKAGPGPVDKEQKQKDYYATVRTNVVLCWSLSNAALVVGILNISSIGTRTIYMGFLLYSVAGLALFRMMGSTIYLIKRLFSGE</sequence>
<comment type="function">
    <text evidence="10">Polymerizes chitin, a structural polymer of the cell wall and septum, by transferring the sugar moiety of UDP-GlcNAc to the non-reducing end of the growing chitin polymer.</text>
</comment>
<comment type="catalytic activity">
    <reaction evidence="10">
        <text>[(1-&gt;4)-N-acetyl-beta-D-glucosaminyl](n) + UDP-N-acetyl-alpha-D-glucosamine = [(1-&gt;4)-N-acetyl-beta-D-glucosaminyl](n+1) + UDP + H(+)</text>
        <dbReference type="Rhea" id="RHEA:16637"/>
        <dbReference type="Rhea" id="RHEA-COMP:9593"/>
        <dbReference type="Rhea" id="RHEA-COMP:9595"/>
        <dbReference type="ChEBI" id="CHEBI:15378"/>
        <dbReference type="ChEBI" id="CHEBI:17029"/>
        <dbReference type="ChEBI" id="CHEBI:57705"/>
        <dbReference type="ChEBI" id="CHEBI:58223"/>
        <dbReference type="EC" id="2.4.1.16"/>
    </reaction>
    <physiologicalReaction direction="left-to-right" evidence="10">
        <dbReference type="Rhea" id="RHEA:16638"/>
    </physiologicalReaction>
</comment>
<comment type="subcellular location">
    <subcellularLocation>
        <location evidence="3">Cell membrane</location>
        <topology evidence="1">Multi-pass membrane protein</topology>
    </subcellularLocation>
    <subcellularLocation>
        <location evidence="4">Cytoplasmic vesicle membrane</location>
        <topology evidence="1">Multi-pass membrane protein</topology>
    </subcellularLocation>
    <text evidence="3 4">A constitutive cytoplasmic pool is present that localizes to intracellular microvesicles termed chitosomes. Chitosomes constitute a separate secretory route distinct from the typical secretory pathway and serve as a vehicle for delivering the enzyme to the sites on the cell surface where polysaccharide sythesis takes place. Localizes to septa of yeast-like cells and to the basal septum separating the living tip cell from the vacuolated part in hyphae.</text>
</comment>
<comment type="induction">
    <text evidence="5 6">Expression is up-regulated in the mycelial form and shows a maximal expression in the log phase at about 14-18 h of incubation.</text>
</comment>
<comment type="similarity">
    <text evidence="9">Belongs to the chitin synthase family. Class I subfamily.</text>
</comment>
<comment type="sequence caution" evidence="9">
    <conflict type="miscellaneous discrepancy">
        <sequence resource="EMBL-CDS" id="CAA61028"/>
    </conflict>
    <text>Contaminating sequence at the N-terminus and at the C-terminus.</text>
</comment>
<organism>
    <name type="scientific">Mycosarcoma maydis</name>
    <name type="common">Corn smut fungus</name>
    <name type="synonym">Ustilago maydis</name>
    <dbReference type="NCBI Taxonomy" id="5270"/>
    <lineage>
        <taxon>Eukaryota</taxon>
        <taxon>Fungi</taxon>
        <taxon>Dikarya</taxon>
        <taxon>Basidiomycota</taxon>
        <taxon>Ustilaginomycotina</taxon>
        <taxon>Ustilaginomycetes</taxon>
        <taxon>Ustilaginales</taxon>
        <taxon>Ustilaginaceae</taxon>
        <taxon>Mycosarcoma</taxon>
    </lineage>
</organism>
<dbReference type="EC" id="2.4.1.16" evidence="10"/>
<dbReference type="EMBL" id="CM003140">
    <property type="protein sequence ID" value="KIS72040.1"/>
    <property type="molecule type" value="Genomic_DNA"/>
</dbReference>
<dbReference type="EMBL" id="X87749">
    <property type="protein sequence ID" value="CAA61028.1"/>
    <property type="status" value="ALT_SEQ"/>
    <property type="molecule type" value="Genomic_DNA"/>
</dbReference>
<dbReference type="PIR" id="S55519">
    <property type="entry name" value="S55519"/>
</dbReference>
<dbReference type="RefSeq" id="XP_011386673.1">
    <property type="nucleotide sequence ID" value="XM_011388371.1"/>
</dbReference>
<dbReference type="SMR" id="Q99127"/>
<dbReference type="FunCoup" id="Q99127">
    <property type="interactions" value="27"/>
</dbReference>
<dbReference type="STRING" id="237631.Q99127"/>
<dbReference type="CAZy" id="GT2">
    <property type="family name" value="Glycosyltransferase Family 2"/>
</dbReference>
<dbReference type="GlyCosmos" id="Q99127">
    <property type="glycosylation" value="1 site, No reported glycans"/>
</dbReference>
<dbReference type="EnsemblFungi" id="KIS72040">
    <property type="protein sequence ID" value="KIS72040"/>
    <property type="gene ID" value="UMAG_10117"/>
</dbReference>
<dbReference type="GeneID" id="23566186"/>
<dbReference type="KEGG" id="uma:UMAG_10117"/>
<dbReference type="VEuPathDB" id="FungiDB:UMAG_10117"/>
<dbReference type="eggNOG" id="KOG2571">
    <property type="taxonomic scope" value="Eukaryota"/>
</dbReference>
<dbReference type="InParanoid" id="Q99127"/>
<dbReference type="OrthoDB" id="26569at2759"/>
<dbReference type="BRENDA" id="2.4.1.16">
    <property type="organism ID" value="6587"/>
</dbReference>
<dbReference type="PHI-base" id="PHI:1111"/>
<dbReference type="Proteomes" id="UP000000561">
    <property type="component" value="Chromosome 1"/>
</dbReference>
<dbReference type="GO" id="GO:0071944">
    <property type="term" value="C:cell periphery"/>
    <property type="evidence" value="ECO:0000318"/>
    <property type="project" value="GO_Central"/>
</dbReference>
<dbReference type="GO" id="GO:0030428">
    <property type="term" value="C:cell septum"/>
    <property type="evidence" value="ECO:0000318"/>
    <property type="project" value="GO_Central"/>
</dbReference>
<dbReference type="GO" id="GO:0045009">
    <property type="term" value="C:chitosome"/>
    <property type="evidence" value="ECO:0007669"/>
    <property type="project" value="EnsemblFungi"/>
</dbReference>
<dbReference type="GO" id="GO:0030659">
    <property type="term" value="C:cytoplasmic vesicle membrane"/>
    <property type="evidence" value="ECO:0007669"/>
    <property type="project" value="UniProtKB-SubCell"/>
</dbReference>
<dbReference type="GO" id="GO:0005886">
    <property type="term" value="C:plasma membrane"/>
    <property type="evidence" value="ECO:0007669"/>
    <property type="project" value="UniProtKB-SubCell"/>
</dbReference>
<dbReference type="GO" id="GO:0004100">
    <property type="term" value="F:chitin synthase activity"/>
    <property type="evidence" value="ECO:0000318"/>
    <property type="project" value="GO_Central"/>
</dbReference>
<dbReference type="GO" id="GO:0071555">
    <property type="term" value="P:cell wall organization"/>
    <property type="evidence" value="ECO:0007669"/>
    <property type="project" value="UniProtKB-KW"/>
</dbReference>
<dbReference type="GO" id="GO:0006031">
    <property type="term" value="P:chitin biosynthetic process"/>
    <property type="evidence" value="ECO:0000318"/>
    <property type="project" value="GO_Central"/>
</dbReference>
<dbReference type="GO" id="GO:0000920">
    <property type="term" value="P:septum digestion after cytokinesis"/>
    <property type="evidence" value="ECO:0007669"/>
    <property type="project" value="EnsemblFungi"/>
</dbReference>
<dbReference type="CDD" id="cd04190">
    <property type="entry name" value="Chitin_synth_C"/>
    <property type="match status" value="1"/>
</dbReference>
<dbReference type="InterPro" id="IPR004835">
    <property type="entry name" value="Chitin_synth"/>
</dbReference>
<dbReference type="InterPro" id="IPR004834">
    <property type="entry name" value="Chitin_synth_fun"/>
</dbReference>
<dbReference type="InterPro" id="IPR013616">
    <property type="entry name" value="Chitin_synth_N"/>
</dbReference>
<dbReference type="InterPro" id="IPR029044">
    <property type="entry name" value="Nucleotide-diphossugar_trans"/>
</dbReference>
<dbReference type="PANTHER" id="PTHR22914">
    <property type="entry name" value="CHITIN SYNTHASE"/>
    <property type="match status" value="1"/>
</dbReference>
<dbReference type="PANTHER" id="PTHR22914:SF9">
    <property type="entry name" value="CHITIN SYNTHASE 1"/>
    <property type="match status" value="1"/>
</dbReference>
<dbReference type="Pfam" id="PF01644">
    <property type="entry name" value="Chitin_synth_1"/>
    <property type="match status" value="1"/>
</dbReference>
<dbReference type="Pfam" id="PF08407">
    <property type="entry name" value="Chitin_synth_1N"/>
    <property type="match status" value="1"/>
</dbReference>
<dbReference type="SUPFAM" id="SSF53448">
    <property type="entry name" value="Nucleotide-diphospho-sugar transferases"/>
    <property type="match status" value="1"/>
</dbReference>
<name>CHS4_MYCMD</name>
<feature type="chain" id="PRO_0000193720" description="Chitin synthase 4">
    <location>
        <begin position="1"/>
        <end position="942"/>
    </location>
</feature>
<feature type="transmembrane region" description="Helical" evidence="1">
    <location>
        <begin position="641"/>
        <end position="661"/>
    </location>
</feature>
<feature type="transmembrane region" description="Helical" evidence="1">
    <location>
        <begin position="674"/>
        <end position="694"/>
    </location>
</feature>
<feature type="transmembrane region" description="Helical" evidence="1">
    <location>
        <begin position="709"/>
        <end position="729"/>
    </location>
</feature>
<feature type="transmembrane region" description="Helical" evidence="1">
    <location>
        <begin position="755"/>
        <end position="775"/>
    </location>
</feature>
<feature type="transmembrane region" description="Helical" evidence="1">
    <location>
        <begin position="783"/>
        <end position="803"/>
    </location>
</feature>
<feature type="transmembrane region" description="Helical" evidence="1">
    <location>
        <begin position="885"/>
        <end position="905"/>
    </location>
</feature>
<feature type="transmembrane region" description="Helical" evidence="1">
    <location>
        <begin position="909"/>
        <end position="929"/>
    </location>
</feature>
<feature type="region of interest" description="Disordered" evidence="2">
    <location>
        <begin position="1"/>
        <end position="124"/>
    </location>
</feature>
<feature type="compositionally biased region" description="Basic and acidic residues" evidence="2">
    <location>
        <begin position="14"/>
        <end position="26"/>
    </location>
</feature>
<feature type="compositionally biased region" description="Polar residues" evidence="2">
    <location>
        <begin position="27"/>
        <end position="36"/>
    </location>
</feature>
<feature type="glycosylation site" description="N-linked (GlcNAc...) asparagine" evidence="1">
    <location>
        <position position="604"/>
    </location>
</feature>
<feature type="sequence conflict" description="In Ref. 3; CAA61028." evidence="9" ref="3">
    <original>PL</original>
    <variation>RN</variation>
    <location>
        <begin position="123"/>
        <end position="124"/>
    </location>
</feature>
<feature type="sequence conflict" description="In Ref. 3; CAA61028." evidence="9" ref="3">
    <location>
        <begin position="126"/>
        <end position="132"/>
    </location>
</feature>
<feature type="sequence conflict" description="In Ref. 3; CAA61028." evidence="9" ref="3">
    <original>Y</original>
    <variation>H</variation>
    <location>
        <position position="152"/>
    </location>
</feature>
<feature type="sequence conflict" description="In Ref. 3; CAA61028." evidence="9" ref="3">
    <original>VGK</original>
    <variation>GGQ</variation>
    <location>
        <begin position="360"/>
        <end position="362"/>
    </location>
</feature>
<feature type="sequence conflict" description="In Ref. 3; CAA61028." evidence="9" ref="3">
    <location>
        <position position="394"/>
    </location>
</feature>
<feature type="sequence conflict" description="In Ref. 3; CAA61028." evidence="9" ref="3">
    <original>GGA</original>
    <variation>AGS</variation>
    <location>
        <begin position="460"/>
        <end position="462"/>
    </location>
</feature>
<accession>Q99127</accession>
<accession>A0A0D1ECR8</accession>
<accession>Q4PHF1</accession>
<reference key="1">
    <citation type="journal article" date="2006" name="Nature">
        <title>Insights from the genome of the biotrophic fungal plant pathogen Ustilago maydis.</title>
        <authorList>
            <person name="Kaemper J."/>
            <person name="Kahmann R."/>
            <person name="Boelker M."/>
            <person name="Ma L.-J."/>
            <person name="Brefort T."/>
            <person name="Saville B.J."/>
            <person name="Banuett F."/>
            <person name="Kronstad J.W."/>
            <person name="Gold S.E."/>
            <person name="Mueller O."/>
            <person name="Perlin M.H."/>
            <person name="Woesten H.A.B."/>
            <person name="de Vries R."/>
            <person name="Ruiz-Herrera J."/>
            <person name="Reynaga-Pena C.G."/>
            <person name="Snetselaar K."/>
            <person name="McCann M."/>
            <person name="Perez-Martin J."/>
            <person name="Feldbruegge M."/>
            <person name="Basse C.W."/>
            <person name="Steinberg G."/>
            <person name="Ibeas J.I."/>
            <person name="Holloman W."/>
            <person name="Guzman P."/>
            <person name="Farman M.L."/>
            <person name="Stajich J.E."/>
            <person name="Sentandreu R."/>
            <person name="Gonzalez-Prieto J.M."/>
            <person name="Kennell J.C."/>
            <person name="Molina L."/>
            <person name="Schirawski J."/>
            <person name="Mendoza-Mendoza A."/>
            <person name="Greilinger D."/>
            <person name="Muench K."/>
            <person name="Roessel N."/>
            <person name="Scherer M."/>
            <person name="Vranes M."/>
            <person name="Ladendorf O."/>
            <person name="Vincon V."/>
            <person name="Fuchs U."/>
            <person name="Sandrock B."/>
            <person name="Meng S."/>
            <person name="Ho E.C.H."/>
            <person name="Cahill M.J."/>
            <person name="Boyce K.J."/>
            <person name="Klose J."/>
            <person name="Klosterman S.J."/>
            <person name="Deelstra H.J."/>
            <person name="Ortiz-Castellanos L."/>
            <person name="Li W."/>
            <person name="Sanchez-Alonso P."/>
            <person name="Schreier P.H."/>
            <person name="Haeuser-Hahn I."/>
            <person name="Vaupel M."/>
            <person name="Koopmann E."/>
            <person name="Friedrich G."/>
            <person name="Voss H."/>
            <person name="Schlueter T."/>
            <person name="Margolis J."/>
            <person name="Platt D."/>
            <person name="Swimmer C."/>
            <person name="Gnirke A."/>
            <person name="Chen F."/>
            <person name="Vysotskaia V."/>
            <person name="Mannhaupt G."/>
            <person name="Gueldener U."/>
            <person name="Muensterkoetter M."/>
            <person name="Haase D."/>
            <person name="Oesterheld M."/>
            <person name="Mewes H.-W."/>
            <person name="Mauceli E.W."/>
            <person name="DeCaprio D."/>
            <person name="Wade C.M."/>
            <person name="Butler J."/>
            <person name="Young S.K."/>
            <person name="Jaffe D.B."/>
            <person name="Calvo S.E."/>
            <person name="Nusbaum C."/>
            <person name="Galagan J.E."/>
            <person name="Birren B.W."/>
        </authorList>
    </citation>
    <scope>NUCLEOTIDE SEQUENCE [LARGE SCALE GENOMIC DNA]</scope>
    <source>
        <strain>DSM 14603 / FGSC 9021 / UM521</strain>
    </source>
</reference>
<reference key="2">
    <citation type="submission" date="2014-09" db="EMBL/GenBank/DDBJ databases">
        <authorList>
            <person name="Gueldener U."/>
            <person name="Muensterkoetter M."/>
            <person name="Walter M.C."/>
            <person name="Mannhaupt G."/>
            <person name="Kahmann R."/>
        </authorList>
    </citation>
    <scope>GENOME REANNOTATION</scope>
    <source>
        <strain>DSM 14603 / FGSC 9021 / UM521</strain>
    </source>
</reference>
<reference key="3">
    <citation type="journal article" date="1996" name="Microbiology">
        <title>Two chitin synthase genes from Ustilago maydis.</title>
        <authorList>
            <person name="Xoconostle-Cazares B."/>
            <person name="Leon-Ramirez C."/>
            <person name="Ruiz-Herrera J."/>
        </authorList>
    </citation>
    <scope>NUCLEOTIDE SEQUENCE [GENOMIC DNA] OF 113-604</scope>
    <source>
        <strain>RK32 / A2B3</strain>
    </source>
</reference>
<reference key="4">
    <citation type="journal article" date="2006" name="FEMS Yeast Res.">
        <title>Immunolocalization of chitin synthases in the phytopathogenic dimorphic fungus Ustilago maydis.</title>
        <authorList>
            <person name="Ruiz-Herrera J."/>
            <person name="Xoconostle-Cazares B."/>
            <person name="Reynaga-Pena C.G."/>
            <person name="Leon-Ramirez C."/>
            <person name="Carabez-Trejo A."/>
        </authorList>
    </citation>
    <scope>SUBCELLULAR LOCATION</scope>
</reference>
<reference key="5">
    <citation type="journal article" date="2006" name="Plant Cell">
        <title>Polar localizing class V myosin chitin synthases are essential during early plant infection in the plant pathogenic fungus Ustilago maydis.</title>
        <authorList>
            <person name="Weber I."/>
            <person name="Assmann D."/>
            <person name="Thines E."/>
            <person name="Steinberg G."/>
        </authorList>
    </citation>
    <scope>SUBCELLULAR LOCATION</scope>
</reference>
<reference key="6">
    <citation type="journal article" date="2012" name="Curr. Microbiol.">
        <title>Transcriptional regulation of the genes encoding chitin and beta-1,3-glucan synthases from Ustilago maydis.</title>
        <authorList>
            <person name="Robledo-Briones M."/>
            <person name="Ruiz-Herrera J."/>
        </authorList>
    </citation>
    <scope>INDUCTION</scope>
</reference>
<reference key="7">
    <citation type="journal article" date="2013" name="FEMS Yeast Res.">
        <title>Regulation of genes involved in cell wall synthesis and structure during Ustilago maydis dimorphism.</title>
        <authorList>
            <person name="Robledo-Briones M."/>
            <person name="Ruiz-Herrera J."/>
        </authorList>
    </citation>
    <scope>INDUCTION</scope>
</reference>
<protein>
    <recommendedName>
        <fullName evidence="7">Chitin synthase 4</fullName>
        <ecNumber evidence="10">2.4.1.16</ecNumber>
    </recommendedName>
    <alternativeName>
        <fullName evidence="8">Chitin synthase II</fullName>
    </alternativeName>
    <alternativeName>
        <fullName>Chitin-UDP acetyl-glucosaminyl transferase 4</fullName>
    </alternativeName>
</protein>